<proteinExistence type="inferred from homology"/>
<keyword id="KW-0067">ATP-binding</keyword>
<keyword id="KW-0963">Cytoplasm</keyword>
<keyword id="KW-0418">Kinase</keyword>
<keyword id="KW-0460">Magnesium</keyword>
<keyword id="KW-0479">Metal-binding</keyword>
<keyword id="KW-0546">Nucleotide metabolism</keyword>
<keyword id="KW-0547">Nucleotide-binding</keyword>
<keyword id="KW-0597">Phosphoprotein</keyword>
<keyword id="KW-1185">Reference proteome</keyword>
<keyword id="KW-0808">Transferase</keyword>
<feature type="chain" id="PRO_1000026294" description="Nucleoside diphosphate kinase">
    <location>
        <begin position="1"/>
        <end position="143"/>
    </location>
</feature>
<feature type="active site" description="Pros-phosphohistidine intermediate" evidence="1">
    <location>
        <position position="117"/>
    </location>
</feature>
<feature type="binding site" evidence="1">
    <location>
        <position position="11"/>
    </location>
    <ligand>
        <name>ATP</name>
        <dbReference type="ChEBI" id="CHEBI:30616"/>
    </ligand>
</feature>
<feature type="binding site" evidence="1">
    <location>
        <position position="59"/>
    </location>
    <ligand>
        <name>ATP</name>
        <dbReference type="ChEBI" id="CHEBI:30616"/>
    </ligand>
</feature>
<feature type="binding site" evidence="1">
    <location>
        <position position="87"/>
    </location>
    <ligand>
        <name>ATP</name>
        <dbReference type="ChEBI" id="CHEBI:30616"/>
    </ligand>
</feature>
<feature type="binding site" evidence="1">
    <location>
        <position position="93"/>
    </location>
    <ligand>
        <name>ATP</name>
        <dbReference type="ChEBI" id="CHEBI:30616"/>
    </ligand>
</feature>
<feature type="binding site" evidence="1">
    <location>
        <position position="104"/>
    </location>
    <ligand>
        <name>ATP</name>
        <dbReference type="ChEBI" id="CHEBI:30616"/>
    </ligand>
</feature>
<feature type="binding site" evidence="1">
    <location>
        <position position="114"/>
    </location>
    <ligand>
        <name>ATP</name>
        <dbReference type="ChEBI" id="CHEBI:30616"/>
    </ligand>
</feature>
<gene>
    <name evidence="1" type="primary">ndk</name>
    <name type="ordered locus">Shew_2310</name>
</gene>
<sequence length="143" mass="15623">MAIERTFSIIKPDAVAKNHIGAIYNRFETAGLKIIASKMVHLSKEQAEGFYAEHSERPFFGALVEFMTSGPIMVQVLEGENAVLANREIMGATNPAEAARGTLRADFADSIDENAVHGSDAVASAEREIAYFFSAEELCPRTR</sequence>
<protein>
    <recommendedName>
        <fullName evidence="1">Nucleoside diphosphate kinase</fullName>
        <shortName evidence="1">NDK</shortName>
        <shortName evidence="1">NDP kinase</shortName>
        <ecNumber evidence="1">2.7.4.6</ecNumber>
    </recommendedName>
    <alternativeName>
        <fullName evidence="1">Nucleoside-2-P kinase</fullName>
    </alternativeName>
</protein>
<dbReference type="EC" id="2.7.4.6" evidence="1"/>
<dbReference type="EMBL" id="CP000606">
    <property type="protein sequence ID" value="ABO24176.1"/>
    <property type="molecule type" value="Genomic_DNA"/>
</dbReference>
<dbReference type="RefSeq" id="WP_011866107.1">
    <property type="nucleotide sequence ID" value="NC_009092.1"/>
</dbReference>
<dbReference type="SMR" id="A3QFC8"/>
<dbReference type="STRING" id="323850.Shew_2310"/>
<dbReference type="KEGG" id="slo:Shew_2310"/>
<dbReference type="eggNOG" id="COG0105">
    <property type="taxonomic scope" value="Bacteria"/>
</dbReference>
<dbReference type="HOGENOM" id="CLU_060216_8_1_6"/>
<dbReference type="OrthoDB" id="9801161at2"/>
<dbReference type="Proteomes" id="UP000001558">
    <property type="component" value="Chromosome"/>
</dbReference>
<dbReference type="GO" id="GO:0005737">
    <property type="term" value="C:cytoplasm"/>
    <property type="evidence" value="ECO:0007669"/>
    <property type="project" value="UniProtKB-SubCell"/>
</dbReference>
<dbReference type="GO" id="GO:0005524">
    <property type="term" value="F:ATP binding"/>
    <property type="evidence" value="ECO:0007669"/>
    <property type="project" value="UniProtKB-UniRule"/>
</dbReference>
<dbReference type="GO" id="GO:0046872">
    <property type="term" value="F:metal ion binding"/>
    <property type="evidence" value="ECO:0007669"/>
    <property type="project" value="UniProtKB-KW"/>
</dbReference>
<dbReference type="GO" id="GO:0004550">
    <property type="term" value="F:nucleoside diphosphate kinase activity"/>
    <property type="evidence" value="ECO:0007669"/>
    <property type="project" value="UniProtKB-UniRule"/>
</dbReference>
<dbReference type="GO" id="GO:0006241">
    <property type="term" value="P:CTP biosynthetic process"/>
    <property type="evidence" value="ECO:0007669"/>
    <property type="project" value="UniProtKB-UniRule"/>
</dbReference>
<dbReference type="GO" id="GO:0006183">
    <property type="term" value="P:GTP biosynthetic process"/>
    <property type="evidence" value="ECO:0007669"/>
    <property type="project" value="UniProtKB-UniRule"/>
</dbReference>
<dbReference type="GO" id="GO:0006228">
    <property type="term" value="P:UTP biosynthetic process"/>
    <property type="evidence" value="ECO:0007669"/>
    <property type="project" value="UniProtKB-UniRule"/>
</dbReference>
<dbReference type="CDD" id="cd04413">
    <property type="entry name" value="NDPk_I"/>
    <property type="match status" value="1"/>
</dbReference>
<dbReference type="FunFam" id="3.30.70.141:FF:000001">
    <property type="entry name" value="Nucleoside diphosphate kinase"/>
    <property type="match status" value="1"/>
</dbReference>
<dbReference type="Gene3D" id="3.30.70.141">
    <property type="entry name" value="Nucleoside diphosphate kinase-like domain"/>
    <property type="match status" value="1"/>
</dbReference>
<dbReference type="HAMAP" id="MF_00451">
    <property type="entry name" value="NDP_kinase"/>
    <property type="match status" value="1"/>
</dbReference>
<dbReference type="InterPro" id="IPR034907">
    <property type="entry name" value="NDK-like_dom"/>
</dbReference>
<dbReference type="InterPro" id="IPR036850">
    <property type="entry name" value="NDK-like_dom_sf"/>
</dbReference>
<dbReference type="InterPro" id="IPR001564">
    <property type="entry name" value="Nucleoside_diP_kinase"/>
</dbReference>
<dbReference type="InterPro" id="IPR023005">
    <property type="entry name" value="Nucleoside_diP_kinase_AS"/>
</dbReference>
<dbReference type="NCBIfam" id="NF001908">
    <property type="entry name" value="PRK00668.1"/>
    <property type="match status" value="1"/>
</dbReference>
<dbReference type="PANTHER" id="PTHR46161">
    <property type="entry name" value="NUCLEOSIDE DIPHOSPHATE KINASE"/>
    <property type="match status" value="1"/>
</dbReference>
<dbReference type="PANTHER" id="PTHR46161:SF3">
    <property type="entry name" value="NUCLEOSIDE DIPHOSPHATE KINASE DDB_G0292928-RELATED"/>
    <property type="match status" value="1"/>
</dbReference>
<dbReference type="Pfam" id="PF00334">
    <property type="entry name" value="NDK"/>
    <property type="match status" value="1"/>
</dbReference>
<dbReference type="PRINTS" id="PR01243">
    <property type="entry name" value="NUCDPKINASE"/>
</dbReference>
<dbReference type="SMART" id="SM00562">
    <property type="entry name" value="NDK"/>
    <property type="match status" value="1"/>
</dbReference>
<dbReference type="SUPFAM" id="SSF54919">
    <property type="entry name" value="Nucleoside diphosphate kinase, NDK"/>
    <property type="match status" value="1"/>
</dbReference>
<dbReference type="PROSITE" id="PS00469">
    <property type="entry name" value="NDPK"/>
    <property type="match status" value="1"/>
</dbReference>
<dbReference type="PROSITE" id="PS51374">
    <property type="entry name" value="NDPK_LIKE"/>
    <property type="match status" value="1"/>
</dbReference>
<comment type="function">
    <text evidence="1">Major role in the synthesis of nucleoside triphosphates other than ATP. The ATP gamma phosphate is transferred to the NDP beta phosphate via a ping-pong mechanism, using a phosphorylated active-site intermediate.</text>
</comment>
<comment type="catalytic activity">
    <reaction evidence="1">
        <text>a 2'-deoxyribonucleoside 5'-diphosphate + ATP = a 2'-deoxyribonucleoside 5'-triphosphate + ADP</text>
        <dbReference type="Rhea" id="RHEA:44640"/>
        <dbReference type="ChEBI" id="CHEBI:30616"/>
        <dbReference type="ChEBI" id="CHEBI:61560"/>
        <dbReference type="ChEBI" id="CHEBI:73316"/>
        <dbReference type="ChEBI" id="CHEBI:456216"/>
        <dbReference type="EC" id="2.7.4.6"/>
    </reaction>
</comment>
<comment type="catalytic activity">
    <reaction evidence="1">
        <text>a ribonucleoside 5'-diphosphate + ATP = a ribonucleoside 5'-triphosphate + ADP</text>
        <dbReference type="Rhea" id="RHEA:18113"/>
        <dbReference type="ChEBI" id="CHEBI:30616"/>
        <dbReference type="ChEBI" id="CHEBI:57930"/>
        <dbReference type="ChEBI" id="CHEBI:61557"/>
        <dbReference type="ChEBI" id="CHEBI:456216"/>
        <dbReference type="EC" id="2.7.4.6"/>
    </reaction>
</comment>
<comment type="cofactor">
    <cofactor evidence="1">
        <name>Mg(2+)</name>
        <dbReference type="ChEBI" id="CHEBI:18420"/>
    </cofactor>
</comment>
<comment type="subunit">
    <text evidence="1">Homotetramer.</text>
</comment>
<comment type="subcellular location">
    <subcellularLocation>
        <location evidence="1">Cytoplasm</location>
    </subcellularLocation>
</comment>
<comment type="similarity">
    <text evidence="1">Belongs to the NDK family.</text>
</comment>
<reference key="1">
    <citation type="submission" date="2007-03" db="EMBL/GenBank/DDBJ databases">
        <title>Complete sequence of Shewanella loihica PV-4.</title>
        <authorList>
            <consortium name="US DOE Joint Genome Institute"/>
            <person name="Copeland A."/>
            <person name="Lucas S."/>
            <person name="Lapidus A."/>
            <person name="Barry K."/>
            <person name="Detter J.C."/>
            <person name="Glavina del Rio T."/>
            <person name="Hammon N."/>
            <person name="Israni S."/>
            <person name="Dalin E."/>
            <person name="Tice H."/>
            <person name="Pitluck S."/>
            <person name="Chain P."/>
            <person name="Malfatti S."/>
            <person name="Shin M."/>
            <person name="Vergez L."/>
            <person name="Schmutz J."/>
            <person name="Larimer F."/>
            <person name="Land M."/>
            <person name="Hauser L."/>
            <person name="Kyrpides N."/>
            <person name="Mikhailova N."/>
            <person name="Romine M.F."/>
            <person name="Serres G."/>
            <person name="Fredrickson J."/>
            <person name="Tiedje J."/>
            <person name="Richardson P."/>
        </authorList>
    </citation>
    <scope>NUCLEOTIDE SEQUENCE [LARGE SCALE GENOMIC DNA]</scope>
    <source>
        <strain>ATCC BAA-1088 / PV-4</strain>
    </source>
</reference>
<name>NDK_SHELP</name>
<accession>A3QFC8</accession>
<evidence type="ECO:0000255" key="1">
    <source>
        <dbReference type="HAMAP-Rule" id="MF_00451"/>
    </source>
</evidence>
<organism>
    <name type="scientific">Shewanella loihica (strain ATCC BAA-1088 / PV-4)</name>
    <dbReference type="NCBI Taxonomy" id="323850"/>
    <lineage>
        <taxon>Bacteria</taxon>
        <taxon>Pseudomonadati</taxon>
        <taxon>Pseudomonadota</taxon>
        <taxon>Gammaproteobacteria</taxon>
        <taxon>Alteromonadales</taxon>
        <taxon>Shewanellaceae</taxon>
        <taxon>Shewanella</taxon>
    </lineage>
</organism>